<evidence type="ECO:0000250" key="1">
    <source>
        <dbReference type="UniProtKB" id="A0A1C9J6A7"/>
    </source>
</evidence>
<evidence type="ECO:0000250" key="2">
    <source>
        <dbReference type="UniProtKB" id="Q40577"/>
    </source>
</evidence>
<evidence type="ECO:0000250" key="3">
    <source>
        <dbReference type="UniProtKB" id="Q84LB2"/>
    </source>
</evidence>
<evidence type="ECO:0000255" key="4"/>
<evidence type="ECO:0000269" key="5">
    <source>
    </source>
</evidence>
<evidence type="ECO:0000303" key="6">
    <source>
    </source>
</evidence>
<evidence type="ECO:0000305" key="7"/>
<sequence>MASISLFPYSILKQTSPLARGTAYNRIYSTKTTGITVDVAESHVRRSANYEPSSWSFDHIQSLSSKYTGDDCVARANTLKESVKTMIRKEGNLLRTLELVDELQRLGISYLFEGEISNLLETIYYNHYKFPEKWNKFDLNLKALGFRLLRQHGYHVPQEIFLNFKDKNQNLNSYLLEDVVGMLNLYEASYHSFEDESILTEARDIATKYLKASLEKIDGSILSLVSHALDNRLHWRVPRVESKWFIEVYEKRVGASPTLIELAKLDFDMVQAIHLEDLKHASRWWRNTSWDTKLTFARDMLVENFLWTVGFSYLPNFSHGRRTITKVAAMITTLDDVYDVFGTLGELEQFTDVINRWDIKAIEQLPDYMKICFFGLYNSINDITYETLATKGFLILPYIKKAWADLCKSYLVEAQWYHRGHIPTLNEYLDNACVSISGPVALMHVHFLTSVSSTKEIHHCIERTQNIVRYVSLIFRLTDDLGTSLGEMERGDTLKSIQLYMHETGATEPEARSYIKSLIDKTWKKLNKERAIVSSESSREFIDYATNLARMAHFMYGEGDEDFRLDVIKSHVSSLLFTPIQGI</sequence>
<reference key="1">
    <citation type="journal article" date="1999" name="Arch. Biochem. Biophys.">
        <title>(3R)-Linalool synthase from Artemisia annua L.: cDNA isolation, characterization, and wound induction.</title>
        <authorList>
            <person name="Jia J.W."/>
            <person name="Crock J."/>
            <person name="Lu S."/>
            <person name="Croteau R."/>
            <person name="Chen X.Y."/>
        </authorList>
    </citation>
    <scope>NUCLEOTIDE SEQUENCE [MRNA]</scope>
    <scope>FUNCTION</scope>
    <scope>CATALYTIC ACTIVITY</scope>
    <scope>PATHWAY</scope>
    <scope>BIOPHYSICOCHEMICAL PROPERTIES</scope>
    <scope>TISSUE SPECIFICITY</scope>
    <scope>INDUCTION BY WOUNDING</scope>
</reference>
<feature type="transit peptide" description="Chloroplast" evidence="4">
    <location>
        <begin position="1"/>
        <end position="40"/>
    </location>
</feature>
<feature type="chain" id="PRO_0000398172" description="R-linalool synthase QH5, chloroplastic">
    <location>
        <begin position="41"/>
        <end position="583"/>
    </location>
</feature>
<feature type="short sequence motif" description="DDXXD motif" evidence="1">
    <location>
        <begin position="335"/>
        <end position="339"/>
    </location>
</feature>
<feature type="binding site" evidence="2">
    <location>
        <position position="298"/>
    </location>
    <ligand>
        <name>(2E)-geranyl diphosphate</name>
        <dbReference type="ChEBI" id="CHEBI:58057"/>
    </ligand>
</feature>
<feature type="binding site" evidence="2">
    <location>
        <position position="335"/>
    </location>
    <ligand>
        <name>(2E)-geranyl diphosphate</name>
        <dbReference type="ChEBI" id="CHEBI:58057"/>
    </ligand>
</feature>
<feature type="binding site" evidence="2">
    <location>
        <position position="335"/>
    </location>
    <ligand>
        <name>Mg(2+)</name>
        <dbReference type="ChEBI" id="CHEBI:18420"/>
        <label>1</label>
    </ligand>
</feature>
<feature type="binding site" evidence="2">
    <location>
        <position position="335"/>
    </location>
    <ligand>
        <name>Mg(2+)</name>
        <dbReference type="ChEBI" id="CHEBI:18420"/>
        <label>2</label>
    </ligand>
</feature>
<feature type="binding site" evidence="2">
    <location>
        <position position="339"/>
    </location>
    <ligand>
        <name>(2E)-geranyl diphosphate</name>
        <dbReference type="ChEBI" id="CHEBI:58057"/>
    </ligand>
</feature>
<feature type="binding site" evidence="2">
    <location>
        <position position="339"/>
    </location>
    <ligand>
        <name>Mg(2+)</name>
        <dbReference type="ChEBI" id="CHEBI:18420"/>
        <label>1</label>
    </ligand>
</feature>
<feature type="binding site" evidence="2">
    <location>
        <position position="339"/>
    </location>
    <ligand>
        <name>Mg(2+)</name>
        <dbReference type="ChEBI" id="CHEBI:18420"/>
        <label>2</label>
    </ligand>
</feature>
<feature type="binding site" evidence="2">
    <location>
        <position position="476"/>
    </location>
    <ligand>
        <name>(2E)-geranyl diphosphate</name>
        <dbReference type="ChEBI" id="CHEBI:58057"/>
    </ligand>
</feature>
<feature type="binding site" evidence="2">
    <location>
        <position position="479"/>
    </location>
    <ligand>
        <name>(2E)-geranyl diphosphate</name>
        <dbReference type="ChEBI" id="CHEBI:58057"/>
    </ligand>
</feature>
<feature type="binding site" evidence="2">
    <location>
        <position position="479"/>
    </location>
    <ligand>
        <name>Mg(2+)</name>
        <dbReference type="ChEBI" id="CHEBI:18420"/>
        <label>3</label>
    </ligand>
</feature>
<feature type="binding site" evidence="2">
    <location>
        <position position="483"/>
    </location>
    <ligand>
        <name>Mg(2+)</name>
        <dbReference type="ChEBI" id="CHEBI:18420"/>
        <label>3</label>
    </ligand>
</feature>
<feature type="binding site" evidence="2">
    <location>
        <position position="487"/>
    </location>
    <ligand>
        <name>Mg(2+)</name>
        <dbReference type="ChEBI" id="CHEBI:18420"/>
        <label>3</label>
    </ligand>
</feature>
<feature type="binding site" evidence="3">
    <location>
        <position position="492"/>
    </location>
    <ligand>
        <name>K(+)</name>
        <dbReference type="ChEBI" id="CHEBI:29103"/>
    </ligand>
</feature>
<comment type="function">
    <text evidence="5">Monoterpene synthase that catalyzes the formation of (3R)-linalool from geranyl diphosphate, but not from isopentenyl diphosphate, dimethylallyl diphosphate, chrysanthemyl diphosphate, farnesyl diphosphate, (+)-copalyl diphosphate or geranylgeranyl diphosphate.</text>
</comment>
<comment type="catalytic activity">
    <reaction evidence="5">
        <text>(2E)-geranyl diphosphate + H2O = (R)-linalool + diphosphate</text>
        <dbReference type="Rhea" id="RHEA:15809"/>
        <dbReference type="ChEBI" id="CHEBI:28"/>
        <dbReference type="ChEBI" id="CHEBI:15377"/>
        <dbReference type="ChEBI" id="CHEBI:33019"/>
        <dbReference type="ChEBI" id="CHEBI:58057"/>
        <dbReference type="EC" id="4.2.3.26"/>
    </reaction>
</comment>
<comment type="cofactor">
    <cofactor evidence="1">
        <name>Mg(2+)</name>
        <dbReference type="ChEBI" id="CHEBI:18420"/>
    </cofactor>
    <cofactor evidence="1">
        <name>Mn(2+)</name>
        <dbReference type="ChEBI" id="CHEBI:29035"/>
    </cofactor>
    <text evidence="1">Binds 3 Mg(2+) or Mn(2+) ions per subunit.</text>
</comment>
<comment type="cofactor">
    <cofactor evidence="3">
        <name>K(+)</name>
        <dbReference type="ChEBI" id="CHEBI:29103"/>
    </cofactor>
</comment>
<comment type="pathway">
    <text evidence="5">Secondary metabolite biosynthesis; terpenoid biosynthesis.</text>
</comment>
<comment type="subcellular location">
    <subcellularLocation>
        <location evidence="4">Plastid</location>
        <location evidence="4">Chloroplast</location>
    </subcellularLocation>
</comment>
<comment type="tissue specificity">
    <text evidence="5">Expressed in every aerial organ except for the stem stele of mature plants. Not detected in roots.</text>
</comment>
<comment type="induction">
    <text evidence="5">By wounding.</text>
</comment>
<comment type="domain">
    <text evidence="1">The Asp-Asp-Xaa-Xaa-Asp/Glu (DDXXD/E) motif is important for the catalytic activity, presumably through binding to Mg(2+).</text>
</comment>
<comment type="similarity">
    <text evidence="7">Belongs to the terpene synthase family. Tpsb subfamily.</text>
</comment>
<protein>
    <recommendedName>
        <fullName evidence="6">R-linalool synthase QH5, chloroplastic</fullName>
        <ecNumber evidence="5">4.2.3.26</ecNumber>
    </recommendedName>
</protein>
<dbReference type="EC" id="4.2.3.26" evidence="5"/>
<dbReference type="EMBL" id="AF154124">
    <property type="protein sequence ID" value="AAF13356.1"/>
    <property type="molecule type" value="mRNA"/>
</dbReference>
<dbReference type="SMR" id="Q9SPN1"/>
<dbReference type="KEGG" id="ag:AAF13356"/>
<dbReference type="UniPathway" id="UPA00213"/>
<dbReference type="GO" id="GO:0009507">
    <property type="term" value="C:chloroplast"/>
    <property type="evidence" value="ECO:0007669"/>
    <property type="project" value="UniProtKB-SubCell"/>
</dbReference>
<dbReference type="GO" id="GO:0000287">
    <property type="term" value="F:magnesium ion binding"/>
    <property type="evidence" value="ECO:0007669"/>
    <property type="project" value="InterPro"/>
</dbReference>
<dbReference type="GO" id="GO:0034008">
    <property type="term" value="F:R-linalool synthase activity"/>
    <property type="evidence" value="ECO:0000314"/>
    <property type="project" value="UniProtKB"/>
</dbReference>
<dbReference type="GO" id="GO:0010333">
    <property type="term" value="F:terpene synthase activity"/>
    <property type="evidence" value="ECO:0007669"/>
    <property type="project" value="InterPro"/>
</dbReference>
<dbReference type="GO" id="GO:0016102">
    <property type="term" value="P:diterpenoid biosynthetic process"/>
    <property type="evidence" value="ECO:0007669"/>
    <property type="project" value="InterPro"/>
</dbReference>
<dbReference type="GO" id="GO:0033383">
    <property type="term" value="P:geranyl diphosphate metabolic process"/>
    <property type="evidence" value="ECO:0000314"/>
    <property type="project" value="UniProtKB"/>
</dbReference>
<dbReference type="GO" id="GO:0009611">
    <property type="term" value="P:response to wounding"/>
    <property type="evidence" value="ECO:0000270"/>
    <property type="project" value="UniProtKB"/>
</dbReference>
<dbReference type="CDD" id="cd00684">
    <property type="entry name" value="Terpene_cyclase_plant_C1"/>
    <property type="match status" value="1"/>
</dbReference>
<dbReference type="FunFam" id="1.10.600.10:FF:000007">
    <property type="entry name" value="Isoprene synthase, chloroplastic"/>
    <property type="match status" value="1"/>
</dbReference>
<dbReference type="FunFam" id="1.50.10.130:FF:000001">
    <property type="entry name" value="Isoprene synthase, chloroplastic"/>
    <property type="match status" value="1"/>
</dbReference>
<dbReference type="Gene3D" id="1.10.600.10">
    <property type="entry name" value="Farnesyl Diphosphate Synthase"/>
    <property type="match status" value="1"/>
</dbReference>
<dbReference type="Gene3D" id="1.50.10.130">
    <property type="entry name" value="Terpene synthase, N-terminal domain"/>
    <property type="match status" value="1"/>
</dbReference>
<dbReference type="InterPro" id="IPR008949">
    <property type="entry name" value="Isoprenoid_synthase_dom_sf"/>
</dbReference>
<dbReference type="InterPro" id="IPR034741">
    <property type="entry name" value="Terpene_cyclase-like_1_C"/>
</dbReference>
<dbReference type="InterPro" id="IPR044814">
    <property type="entry name" value="Terpene_cyclase_plant_C1"/>
</dbReference>
<dbReference type="InterPro" id="IPR001906">
    <property type="entry name" value="Terpene_synth_N"/>
</dbReference>
<dbReference type="InterPro" id="IPR036965">
    <property type="entry name" value="Terpene_synth_N_sf"/>
</dbReference>
<dbReference type="InterPro" id="IPR050148">
    <property type="entry name" value="Terpene_synthase-like"/>
</dbReference>
<dbReference type="InterPro" id="IPR005630">
    <property type="entry name" value="Terpene_synthase_metal-bd"/>
</dbReference>
<dbReference type="InterPro" id="IPR008930">
    <property type="entry name" value="Terpenoid_cyclase/PrenylTrfase"/>
</dbReference>
<dbReference type="PANTHER" id="PTHR31225">
    <property type="entry name" value="OS04G0344100 PROTEIN-RELATED"/>
    <property type="match status" value="1"/>
</dbReference>
<dbReference type="PANTHER" id="PTHR31225:SF9">
    <property type="entry name" value="TERPENE SYNTHASE 10"/>
    <property type="match status" value="1"/>
</dbReference>
<dbReference type="Pfam" id="PF01397">
    <property type="entry name" value="Terpene_synth"/>
    <property type="match status" value="1"/>
</dbReference>
<dbReference type="Pfam" id="PF03936">
    <property type="entry name" value="Terpene_synth_C"/>
    <property type="match status" value="1"/>
</dbReference>
<dbReference type="SFLD" id="SFLDS00005">
    <property type="entry name" value="Isoprenoid_Synthase_Type_I"/>
    <property type="match status" value="1"/>
</dbReference>
<dbReference type="SFLD" id="SFLDG01019">
    <property type="entry name" value="Terpene_Cyclase_Like_1_C_Termi"/>
    <property type="match status" value="1"/>
</dbReference>
<dbReference type="SUPFAM" id="SSF48239">
    <property type="entry name" value="Terpenoid cyclases/Protein prenyltransferases"/>
    <property type="match status" value="1"/>
</dbReference>
<dbReference type="SUPFAM" id="SSF48576">
    <property type="entry name" value="Terpenoid synthases"/>
    <property type="match status" value="1"/>
</dbReference>
<organism>
    <name type="scientific">Artemisia annua</name>
    <name type="common">Sweet wormwood</name>
    <dbReference type="NCBI Taxonomy" id="35608"/>
    <lineage>
        <taxon>Eukaryota</taxon>
        <taxon>Viridiplantae</taxon>
        <taxon>Streptophyta</taxon>
        <taxon>Embryophyta</taxon>
        <taxon>Tracheophyta</taxon>
        <taxon>Spermatophyta</taxon>
        <taxon>Magnoliopsida</taxon>
        <taxon>eudicotyledons</taxon>
        <taxon>Gunneridae</taxon>
        <taxon>Pentapetalae</taxon>
        <taxon>asterids</taxon>
        <taxon>campanulids</taxon>
        <taxon>Asterales</taxon>
        <taxon>Asteraceae</taxon>
        <taxon>Asteroideae</taxon>
        <taxon>Anthemideae</taxon>
        <taxon>Artemisiinae</taxon>
        <taxon>Artemisia</taxon>
    </lineage>
</organism>
<name>LLOS5_ARTAN</name>
<keyword id="KW-0150">Chloroplast</keyword>
<keyword id="KW-0456">Lyase</keyword>
<keyword id="KW-0460">Magnesium</keyword>
<keyword id="KW-0479">Metal-binding</keyword>
<keyword id="KW-0934">Plastid</keyword>
<keyword id="KW-0630">Potassium</keyword>
<keyword id="KW-0809">Transit peptide</keyword>
<accession>Q9SPN1</accession>
<proteinExistence type="evidence at protein level"/>
<gene>
    <name evidence="6" type="primary">QH5</name>
</gene>